<proteinExistence type="inferred from homology"/>
<evidence type="ECO:0000255" key="1">
    <source>
        <dbReference type="HAMAP-Rule" id="MF_01368"/>
    </source>
</evidence>
<evidence type="ECO:0000305" key="2"/>
<keyword id="KW-0687">Ribonucleoprotein</keyword>
<keyword id="KW-0689">Ribosomal protein</keyword>
<name>RL17_CLOB1</name>
<dbReference type="EMBL" id="CP000726">
    <property type="protein sequence ID" value="ABS35175.1"/>
    <property type="molecule type" value="Genomic_DNA"/>
</dbReference>
<dbReference type="RefSeq" id="WP_003357477.1">
    <property type="nucleotide sequence ID" value="NC_009697.1"/>
</dbReference>
<dbReference type="SMR" id="A7FZ43"/>
<dbReference type="GeneID" id="5187110"/>
<dbReference type="KEGG" id="cba:CLB_3507"/>
<dbReference type="HOGENOM" id="CLU_074407_2_2_9"/>
<dbReference type="GO" id="GO:0022625">
    <property type="term" value="C:cytosolic large ribosomal subunit"/>
    <property type="evidence" value="ECO:0007669"/>
    <property type="project" value="TreeGrafter"/>
</dbReference>
<dbReference type="GO" id="GO:0003735">
    <property type="term" value="F:structural constituent of ribosome"/>
    <property type="evidence" value="ECO:0007669"/>
    <property type="project" value="InterPro"/>
</dbReference>
<dbReference type="GO" id="GO:0006412">
    <property type="term" value="P:translation"/>
    <property type="evidence" value="ECO:0007669"/>
    <property type="project" value="UniProtKB-UniRule"/>
</dbReference>
<dbReference type="FunFam" id="3.90.1030.10:FF:000002">
    <property type="entry name" value="50S ribosomal protein L17"/>
    <property type="match status" value="1"/>
</dbReference>
<dbReference type="Gene3D" id="3.90.1030.10">
    <property type="entry name" value="Ribosomal protein L17"/>
    <property type="match status" value="1"/>
</dbReference>
<dbReference type="HAMAP" id="MF_01368">
    <property type="entry name" value="Ribosomal_bL17"/>
    <property type="match status" value="1"/>
</dbReference>
<dbReference type="InterPro" id="IPR000456">
    <property type="entry name" value="Ribosomal_bL17"/>
</dbReference>
<dbReference type="InterPro" id="IPR047859">
    <property type="entry name" value="Ribosomal_bL17_CS"/>
</dbReference>
<dbReference type="InterPro" id="IPR036373">
    <property type="entry name" value="Ribosomal_bL17_sf"/>
</dbReference>
<dbReference type="NCBIfam" id="TIGR00059">
    <property type="entry name" value="L17"/>
    <property type="match status" value="1"/>
</dbReference>
<dbReference type="PANTHER" id="PTHR14413:SF16">
    <property type="entry name" value="LARGE RIBOSOMAL SUBUNIT PROTEIN BL17M"/>
    <property type="match status" value="1"/>
</dbReference>
<dbReference type="PANTHER" id="PTHR14413">
    <property type="entry name" value="RIBOSOMAL PROTEIN L17"/>
    <property type="match status" value="1"/>
</dbReference>
<dbReference type="Pfam" id="PF01196">
    <property type="entry name" value="Ribosomal_L17"/>
    <property type="match status" value="1"/>
</dbReference>
<dbReference type="SUPFAM" id="SSF64263">
    <property type="entry name" value="Prokaryotic ribosomal protein L17"/>
    <property type="match status" value="1"/>
</dbReference>
<dbReference type="PROSITE" id="PS01167">
    <property type="entry name" value="RIBOSOMAL_L17"/>
    <property type="match status" value="1"/>
</dbReference>
<sequence>MAGYRKLGRPTDQRKAMLRNLVTSFLKHGKIETTETRAKETRSIAEKMITLAKRGDLHARRQVLSFVTEETVVQRLFEEIAPKYAERNGGYTRIYKVGPRRGDGAEVVILELV</sequence>
<accession>A7FZ43</accession>
<protein>
    <recommendedName>
        <fullName evidence="1">Large ribosomal subunit protein bL17</fullName>
    </recommendedName>
    <alternativeName>
        <fullName evidence="2">50S ribosomal protein L17</fullName>
    </alternativeName>
</protein>
<feature type="chain" id="PRO_1000055802" description="Large ribosomal subunit protein bL17">
    <location>
        <begin position="1"/>
        <end position="113"/>
    </location>
</feature>
<reference key="1">
    <citation type="journal article" date="2007" name="PLoS ONE">
        <title>Analysis of the neurotoxin complex genes in Clostridium botulinum A1-A4 and B1 strains: BoNT/A3, /Ba4 and /B1 clusters are located within plasmids.</title>
        <authorList>
            <person name="Smith T.J."/>
            <person name="Hill K.K."/>
            <person name="Foley B.T."/>
            <person name="Detter J.C."/>
            <person name="Munk A.C."/>
            <person name="Bruce D.C."/>
            <person name="Doggett N.A."/>
            <person name="Smith L.A."/>
            <person name="Marks J.D."/>
            <person name="Xie G."/>
            <person name="Brettin T.S."/>
        </authorList>
    </citation>
    <scope>NUCLEOTIDE SEQUENCE [LARGE SCALE GENOMIC DNA]</scope>
    <source>
        <strain>ATCC 19397 / Type A</strain>
    </source>
</reference>
<organism>
    <name type="scientific">Clostridium botulinum (strain ATCC 19397 / Type A)</name>
    <dbReference type="NCBI Taxonomy" id="441770"/>
    <lineage>
        <taxon>Bacteria</taxon>
        <taxon>Bacillati</taxon>
        <taxon>Bacillota</taxon>
        <taxon>Clostridia</taxon>
        <taxon>Eubacteriales</taxon>
        <taxon>Clostridiaceae</taxon>
        <taxon>Clostridium</taxon>
    </lineage>
</organism>
<comment type="subunit">
    <text evidence="1">Part of the 50S ribosomal subunit. Contacts protein L32.</text>
</comment>
<comment type="similarity">
    <text evidence="1">Belongs to the bacterial ribosomal protein bL17 family.</text>
</comment>
<gene>
    <name evidence="1" type="primary">rplQ</name>
    <name type="ordered locus">CLB_3507</name>
</gene>